<name>QUEC_HAEIE</name>
<evidence type="ECO:0000255" key="1">
    <source>
        <dbReference type="HAMAP-Rule" id="MF_01633"/>
    </source>
</evidence>
<dbReference type="EC" id="6.3.4.20" evidence="1"/>
<dbReference type="EMBL" id="CP000671">
    <property type="protein sequence ID" value="ABQ98570.1"/>
    <property type="molecule type" value="Genomic_DNA"/>
</dbReference>
<dbReference type="SMR" id="A5UCR9"/>
<dbReference type="KEGG" id="hip:CGSHiEE_06085"/>
<dbReference type="HOGENOM" id="CLU_081854_0_0_6"/>
<dbReference type="UniPathway" id="UPA00391"/>
<dbReference type="GO" id="GO:0005524">
    <property type="term" value="F:ATP binding"/>
    <property type="evidence" value="ECO:0007669"/>
    <property type="project" value="UniProtKB-UniRule"/>
</dbReference>
<dbReference type="GO" id="GO:0016879">
    <property type="term" value="F:ligase activity, forming carbon-nitrogen bonds"/>
    <property type="evidence" value="ECO:0007669"/>
    <property type="project" value="UniProtKB-UniRule"/>
</dbReference>
<dbReference type="GO" id="GO:0008270">
    <property type="term" value="F:zinc ion binding"/>
    <property type="evidence" value="ECO:0007669"/>
    <property type="project" value="UniProtKB-UniRule"/>
</dbReference>
<dbReference type="GO" id="GO:0008616">
    <property type="term" value="P:queuosine biosynthetic process"/>
    <property type="evidence" value="ECO:0007669"/>
    <property type="project" value="UniProtKB-UniRule"/>
</dbReference>
<dbReference type="CDD" id="cd01995">
    <property type="entry name" value="QueC-like"/>
    <property type="match status" value="1"/>
</dbReference>
<dbReference type="FunFam" id="3.40.50.620:FF:000017">
    <property type="entry name" value="7-cyano-7-deazaguanine synthase"/>
    <property type="match status" value="1"/>
</dbReference>
<dbReference type="Gene3D" id="3.40.50.620">
    <property type="entry name" value="HUPs"/>
    <property type="match status" value="1"/>
</dbReference>
<dbReference type="HAMAP" id="MF_01633">
    <property type="entry name" value="QueC"/>
    <property type="match status" value="1"/>
</dbReference>
<dbReference type="InterPro" id="IPR018317">
    <property type="entry name" value="QueC"/>
</dbReference>
<dbReference type="InterPro" id="IPR014729">
    <property type="entry name" value="Rossmann-like_a/b/a_fold"/>
</dbReference>
<dbReference type="NCBIfam" id="TIGR00364">
    <property type="entry name" value="7-cyano-7-deazaguanine synthase QueC"/>
    <property type="match status" value="1"/>
</dbReference>
<dbReference type="PANTHER" id="PTHR42914">
    <property type="entry name" value="7-CYANO-7-DEAZAGUANINE SYNTHASE"/>
    <property type="match status" value="1"/>
</dbReference>
<dbReference type="PANTHER" id="PTHR42914:SF1">
    <property type="entry name" value="7-CYANO-7-DEAZAGUANINE SYNTHASE"/>
    <property type="match status" value="1"/>
</dbReference>
<dbReference type="Pfam" id="PF06508">
    <property type="entry name" value="QueC"/>
    <property type="match status" value="1"/>
</dbReference>
<dbReference type="PIRSF" id="PIRSF006293">
    <property type="entry name" value="ExsB"/>
    <property type="match status" value="1"/>
</dbReference>
<dbReference type="SUPFAM" id="SSF52402">
    <property type="entry name" value="Adenine nucleotide alpha hydrolases-like"/>
    <property type="match status" value="1"/>
</dbReference>
<reference key="1">
    <citation type="journal article" date="2007" name="Genome Biol.">
        <title>Characterization and modeling of the Haemophilus influenzae core and supragenomes based on the complete genomic sequences of Rd and 12 clinical nontypeable strains.</title>
        <authorList>
            <person name="Hogg J.S."/>
            <person name="Hu F.Z."/>
            <person name="Janto B."/>
            <person name="Boissy R."/>
            <person name="Hayes J."/>
            <person name="Keefe R."/>
            <person name="Post J.C."/>
            <person name="Ehrlich G.D."/>
        </authorList>
    </citation>
    <scope>NUCLEOTIDE SEQUENCE [LARGE SCALE GENOMIC DNA]</scope>
    <source>
        <strain>PittEE</strain>
    </source>
</reference>
<sequence>MNIFNPNHDRKAIVIFSGGQDSTTCLFQAIAEYGKENIEAITFQYGQRHAIELEKARAIVQDLGIKQTLIDTSVMKAITHNALMDEQAHIEQKENELPNTFVDGRNALFLLYAAIYAKGQGIQDIITGVCETDFSGYPDCRDVFIKSMNVTLNLAMDYQFNIKTPLMYLTKAQTWQLADELGVLNYVQKHTHTCYEGIEGGCGKCPSCILRNKGLKKYLTQKGRKNV</sequence>
<protein>
    <recommendedName>
        <fullName evidence="1">7-cyano-7-deazaguanine synthase</fullName>
        <ecNumber evidence="1">6.3.4.20</ecNumber>
    </recommendedName>
    <alternativeName>
        <fullName evidence="1">7-cyano-7-carbaguanine synthase</fullName>
    </alternativeName>
    <alternativeName>
        <fullName evidence="1">PreQ(0) synthase</fullName>
    </alternativeName>
    <alternativeName>
        <fullName evidence="1">Queuosine biosynthesis protein QueC</fullName>
    </alternativeName>
</protein>
<gene>
    <name evidence="1" type="primary">queC</name>
    <name type="ordered locus">CGSHiEE_06085</name>
</gene>
<accession>A5UCR9</accession>
<feature type="chain" id="PRO_0000336916" description="7-cyano-7-deazaguanine synthase">
    <location>
        <begin position="1"/>
        <end position="227"/>
    </location>
</feature>
<feature type="binding site" evidence="1">
    <location>
        <begin position="16"/>
        <end position="26"/>
    </location>
    <ligand>
        <name>ATP</name>
        <dbReference type="ChEBI" id="CHEBI:30616"/>
    </ligand>
</feature>
<feature type="binding site" evidence="1">
    <location>
        <position position="194"/>
    </location>
    <ligand>
        <name>Zn(2+)</name>
        <dbReference type="ChEBI" id="CHEBI:29105"/>
    </ligand>
</feature>
<feature type="binding site" evidence="1">
    <location>
        <position position="202"/>
    </location>
    <ligand>
        <name>Zn(2+)</name>
        <dbReference type="ChEBI" id="CHEBI:29105"/>
    </ligand>
</feature>
<feature type="binding site" evidence="1">
    <location>
        <position position="205"/>
    </location>
    <ligand>
        <name>Zn(2+)</name>
        <dbReference type="ChEBI" id="CHEBI:29105"/>
    </ligand>
</feature>
<feature type="binding site" evidence="1">
    <location>
        <position position="208"/>
    </location>
    <ligand>
        <name>Zn(2+)</name>
        <dbReference type="ChEBI" id="CHEBI:29105"/>
    </ligand>
</feature>
<organism>
    <name type="scientific">Haemophilus influenzae (strain PittEE)</name>
    <dbReference type="NCBI Taxonomy" id="374930"/>
    <lineage>
        <taxon>Bacteria</taxon>
        <taxon>Pseudomonadati</taxon>
        <taxon>Pseudomonadota</taxon>
        <taxon>Gammaproteobacteria</taxon>
        <taxon>Pasteurellales</taxon>
        <taxon>Pasteurellaceae</taxon>
        <taxon>Haemophilus</taxon>
    </lineage>
</organism>
<proteinExistence type="inferred from homology"/>
<keyword id="KW-0067">ATP-binding</keyword>
<keyword id="KW-0436">Ligase</keyword>
<keyword id="KW-0479">Metal-binding</keyword>
<keyword id="KW-0547">Nucleotide-binding</keyword>
<keyword id="KW-0671">Queuosine biosynthesis</keyword>
<keyword id="KW-0862">Zinc</keyword>
<comment type="function">
    <text evidence="1">Catalyzes the ATP-dependent conversion of 7-carboxy-7-deazaguanine (CDG) to 7-cyano-7-deazaguanine (preQ(0)).</text>
</comment>
<comment type="catalytic activity">
    <reaction evidence="1">
        <text>7-carboxy-7-deazaguanine + NH4(+) + ATP = 7-cyano-7-deazaguanine + ADP + phosphate + H2O + H(+)</text>
        <dbReference type="Rhea" id="RHEA:27982"/>
        <dbReference type="ChEBI" id="CHEBI:15377"/>
        <dbReference type="ChEBI" id="CHEBI:15378"/>
        <dbReference type="ChEBI" id="CHEBI:28938"/>
        <dbReference type="ChEBI" id="CHEBI:30616"/>
        <dbReference type="ChEBI" id="CHEBI:43474"/>
        <dbReference type="ChEBI" id="CHEBI:45075"/>
        <dbReference type="ChEBI" id="CHEBI:61036"/>
        <dbReference type="ChEBI" id="CHEBI:456216"/>
        <dbReference type="EC" id="6.3.4.20"/>
    </reaction>
</comment>
<comment type="cofactor">
    <cofactor evidence="1">
        <name>Zn(2+)</name>
        <dbReference type="ChEBI" id="CHEBI:29105"/>
    </cofactor>
    <text evidence="1">Binds 1 zinc ion per subunit.</text>
</comment>
<comment type="pathway">
    <text evidence="1">Purine metabolism; 7-cyano-7-deazaguanine biosynthesis.</text>
</comment>
<comment type="similarity">
    <text evidence="1">Belongs to the QueC family.</text>
</comment>